<feature type="chain" id="PRO_0000057608" description="Spherulin-3A">
    <location>
        <begin position="1"/>
        <end position="103"/>
    </location>
</feature>
<feature type="domain" description="Beta/gamma crystallin 'Greek key' 1" evidence="1">
    <location>
        <begin position="14"/>
        <end position="55"/>
    </location>
</feature>
<feature type="domain" description="Beta/gamma crystallin 'Greek key' 2" evidence="1">
    <location>
        <begin position="57"/>
        <end position="99"/>
    </location>
</feature>
<feature type="region of interest" description="N-terminal arm">
    <location>
        <begin position="1"/>
        <end position="13"/>
    </location>
</feature>
<feature type="strand" evidence="4">
    <location>
        <begin position="3"/>
        <end position="5"/>
    </location>
</feature>
<feature type="strand" evidence="4">
    <location>
        <begin position="16"/>
        <end position="21"/>
    </location>
</feature>
<feature type="helix" evidence="4">
    <location>
        <begin position="22"/>
        <end position="24"/>
    </location>
</feature>
<feature type="strand" evidence="4">
    <location>
        <begin position="25"/>
        <end position="31"/>
    </location>
</feature>
<feature type="strand" evidence="4">
    <location>
        <begin position="33"/>
        <end position="36"/>
    </location>
</feature>
<feature type="helix" evidence="4">
    <location>
        <begin position="38"/>
        <end position="40"/>
    </location>
</feature>
<feature type="turn" evidence="4">
    <location>
        <begin position="42"/>
        <end position="47"/>
    </location>
</feature>
<feature type="strand" evidence="4">
    <location>
        <begin position="50"/>
        <end position="53"/>
    </location>
</feature>
<feature type="strand" evidence="4">
    <location>
        <begin position="57"/>
        <end position="64"/>
    </location>
</feature>
<feature type="helix" evidence="4">
    <location>
        <begin position="65"/>
        <end position="67"/>
    </location>
</feature>
<feature type="strand" evidence="4">
    <location>
        <begin position="69"/>
        <end position="74"/>
    </location>
</feature>
<feature type="strand" evidence="4">
    <location>
        <begin position="78"/>
        <end position="81"/>
    </location>
</feature>
<feature type="helix" evidence="4">
    <location>
        <begin position="83"/>
        <end position="86"/>
    </location>
</feature>
<feature type="strand" evidence="3">
    <location>
        <begin position="88"/>
        <end position="90"/>
    </location>
</feature>
<feature type="strand" evidence="4">
    <location>
        <begin position="94"/>
        <end position="99"/>
    </location>
</feature>
<accession>P09353</accession>
<evidence type="ECO:0000255" key="1">
    <source>
        <dbReference type="PROSITE-ProRule" id="PRU00028"/>
    </source>
</evidence>
<evidence type="ECO:0000305" key="2"/>
<evidence type="ECO:0007829" key="3">
    <source>
        <dbReference type="PDB" id="1AG4"/>
    </source>
</evidence>
<evidence type="ECO:0007829" key="4">
    <source>
        <dbReference type="PDB" id="1HDF"/>
    </source>
</evidence>
<dbReference type="EMBL" id="M18431">
    <property type="protein sequence ID" value="AAA29981.1"/>
    <property type="molecule type" value="mRNA"/>
</dbReference>
<dbReference type="PIR" id="D29624">
    <property type="entry name" value="D29624"/>
</dbReference>
<dbReference type="PDB" id="1AG4">
    <property type="method" value="NMR"/>
    <property type="chains" value="A=1-103"/>
</dbReference>
<dbReference type="PDB" id="1HDF">
    <property type="method" value="X-ray"/>
    <property type="resolution" value="2.35 A"/>
    <property type="chains" value="A/B=2-103"/>
</dbReference>
<dbReference type="PDBsum" id="1AG4"/>
<dbReference type="PDBsum" id="1HDF"/>
<dbReference type="SMR" id="P09353"/>
<dbReference type="EvolutionaryTrace" id="P09353"/>
<dbReference type="GO" id="GO:0005737">
    <property type="term" value="C:cytoplasm"/>
    <property type="evidence" value="ECO:0007669"/>
    <property type="project" value="UniProtKB-SubCell"/>
</dbReference>
<dbReference type="GO" id="GO:0016020">
    <property type="term" value="C:membrane"/>
    <property type="evidence" value="ECO:0007669"/>
    <property type="project" value="InterPro"/>
</dbReference>
<dbReference type="GO" id="GO:0098609">
    <property type="term" value="P:cell-cell adhesion"/>
    <property type="evidence" value="ECO:0007669"/>
    <property type="project" value="InterPro"/>
</dbReference>
<dbReference type="Gene3D" id="2.60.20.10">
    <property type="entry name" value="Crystallins"/>
    <property type="match status" value="1"/>
</dbReference>
<dbReference type="InterPro" id="IPR001064">
    <property type="entry name" value="Beta/gamma_crystallin"/>
</dbReference>
<dbReference type="InterPro" id="IPR015059">
    <property type="entry name" value="Ca_cell_adhesion_N_dom"/>
</dbReference>
<dbReference type="InterPro" id="IPR011024">
    <property type="entry name" value="G_crystallin-like"/>
</dbReference>
<dbReference type="Pfam" id="PF08964">
    <property type="entry name" value="Crystall_3"/>
    <property type="match status" value="1"/>
</dbReference>
<dbReference type="SMART" id="SM00247">
    <property type="entry name" value="XTALbg"/>
    <property type="match status" value="1"/>
</dbReference>
<dbReference type="SUPFAM" id="SSF49695">
    <property type="entry name" value="gamma-Crystallin-like"/>
    <property type="match status" value="1"/>
</dbReference>
<dbReference type="PROSITE" id="PS50915">
    <property type="entry name" value="CRYSTALLIN_BETA_GAMMA"/>
    <property type="match status" value="2"/>
</dbReference>
<organism>
    <name type="scientific">Physarum polycephalum</name>
    <name type="common">Slime mold</name>
    <dbReference type="NCBI Taxonomy" id="5791"/>
    <lineage>
        <taxon>Eukaryota</taxon>
        <taxon>Amoebozoa</taxon>
        <taxon>Evosea</taxon>
        <taxon>Eumycetozoa</taxon>
        <taxon>Myxogastria</taxon>
        <taxon>Myxogastromycetidae</taxon>
        <taxon>Physariida</taxon>
        <taxon>Physaraceae</taxon>
        <taxon>Physarum</taxon>
    </lineage>
</organism>
<reference key="1">
    <citation type="journal article" date="1987" name="Gene">
        <title>Gene families encode the major encystment-specific proteins of Physarum polycephalum plasmodia.</title>
        <authorList>
            <person name="Bernier F."/>
            <person name="Lemieux G."/>
            <person name="Pallotta D."/>
        </authorList>
    </citation>
    <scope>NUCLEOTIDE SEQUENCE [MRNA]</scope>
</reference>
<reference key="2">
    <citation type="journal article" date="1990" name="J. Mol. Evol.">
        <title>Evolution of a protein superfamily: relationships between vertebrate lens crystallins and microorganism dormancy proteins.</title>
        <authorList>
            <person name="Wistow G."/>
        </authorList>
    </citation>
    <scope>SIMILARITY TO BETA/GAMMA CRYSTALLINS</scope>
</reference>
<reference key="3">
    <citation type="journal article" date="1997" name="J. Mol. Biol.">
        <title>Ca2+-loaded spherulin 3a from Physarum polycephalum adopts the prototype gamma-crystallin fold in aqueous solution.</title>
        <authorList>
            <person name="Rosinke B."/>
            <person name="Renner C."/>
            <person name="Mayr E.-M."/>
            <person name="Jaenicke R."/>
            <person name="Holak T.A."/>
        </authorList>
    </citation>
    <scope>STRUCTURE BY NMR</scope>
</reference>
<sequence length="103" mass="11285">MSVCKGVSGNPAKGEVFLYKHVNFQGDSWKVTGNVYDFRSVSGLNDVVSSVKVGPNTKAFIFKDDRFNGNFIRLEESSQVTDLTTRNLNDAISSIIVATFESA</sequence>
<keyword id="KW-0002">3D-structure</keyword>
<keyword id="KW-0963">Cytoplasm</keyword>
<keyword id="KW-0677">Repeat</keyword>
<protein>
    <recommendedName>
        <fullName>Spherulin-3A</fullName>
        <shortName>S3A</shortName>
    </recommendedName>
</protein>
<comment type="function">
    <text>Structural protein.</text>
</comment>
<comment type="subcellular location">
    <subcellularLocation>
        <location>Cytoplasm</location>
    </subcellularLocation>
</comment>
<comment type="developmental stage">
    <text>Major encystment-specific protein.</text>
</comment>
<comment type="similarity">
    <text evidence="2">Belongs to the beta/gamma-crystallin family.</text>
</comment>
<proteinExistence type="evidence at protein level"/>
<name>SR3A_PHYPO</name>